<name>HSPB1_POELU</name>
<gene>
    <name type="primary">hspb1</name>
</gene>
<reference key="1">
    <citation type="journal article" date="1997" name="Mol. Biol. Evol.">
        <title>Low-molecular-weight heat shock proteins in a desert fish (Poeciliopsis lucida): homologs of human Hsp27 and Xenopus Hsp30.</title>
        <authorList>
            <person name="Norris C.E."/>
            <person name="Brown M.A."/>
            <person name="Hickey E."/>
            <person name="Weber L.A."/>
            <person name="Hightower L.E."/>
        </authorList>
    </citation>
    <scope>NUCLEOTIDE SEQUENCE [MRNA]</scope>
    <source>
        <strain>M61-31</strain>
    </source>
</reference>
<accession>O13224</accession>
<sequence>MAERRIPFTLQRTPSWDVPDLHQTSRIFDQAFGLPPVFEDFSGFPTTHWPGYMRPSLMTPDIMIPQSPMMYHPGHMMAHQARALSRQMSSGMSEIKQTQDNWKISLDVPHFSPEELVVKTKDGVLEISGKHEERKDEHGFVSRSFTRKYTLPPTANIEKVTSSLSPEGVLTVEAPINKPALEYSETTIPVNVESSGAVAKK</sequence>
<keyword id="KW-0143">Chaperone</keyword>
<keyword id="KW-0963">Cytoplasm</keyword>
<keyword id="KW-0206">Cytoskeleton</keyword>
<keyword id="KW-0539">Nucleus</keyword>
<keyword id="KW-0597">Phosphoprotein</keyword>
<keyword id="KW-0346">Stress response</keyword>
<organism>
    <name type="scientific">Poeciliopsis lucida</name>
    <name type="common">Desert topminnow</name>
    <dbReference type="NCBI Taxonomy" id="56613"/>
    <lineage>
        <taxon>Eukaryota</taxon>
        <taxon>Metazoa</taxon>
        <taxon>Chordata</taxon>
        <taxon>Craniata</taxon>
        <taxon>Vertebrata</taxon>
        <taxon>Euteleostomi</taxon>
        <taxon>Actinopterygii</taxon>
        <taxon>Neopterygii</taxon>
        <taxon>Teleostei</taxon>
        <taxon>Neoteleostei</taxon>
        <taxon>Acanthomorphata</taxon>
        <taxon>Ovalentaria</taxon>
        <taxon>Atherinomorphae</taxon>
        <taxon>Cyprinodontiformes</taxon>
        <taxon>Poeciliidae</taxon>
        <taxon>Poeciliinae</taxon>
        <taxon>Poeciliopsis</taxon>
    </lineage>
</organism>
<protein>
    <recommendedName>
        <fullName>Heat shock protein beta-1</fullName>
        <shortName>HspB1</shortName>
    </recommendedName>
    <alternativeName>
        <fullName>Heat shock 27 kDa protein</fullName>
        <shortName>HSP 27</shortName>
    </alternativeName>
</protein>
<proteinExistence type="evidence at transcript level"/>
<evidence type="ECO:0000250" key="1"/>
<evidence type="ECO:0000250" key="2">
    <source>
        <dbReference type="UniProtKB" id="P04792"/>
    </source>
</evidence>
<evidence type="ECO:0000255" key="3">
    <source>
        <dbReference type="PROSITE-ProRule" id="PRU00285"/>
    </source>
</evidence>
<dbReference type="EMBL" id="U85501">
    <property type="protein sequence ID" value="AAB46593.1"/>
    <property type="molecule type" value="mRNA"/>
</dbReference>
<dbReference type="SMR" id="O13224"/>
<dbReference type="GO" id="GO:0005737">
    <property type="term" value="C:cytoplasm"/>
    <property type="evidence" value="ECO:0000250"/>
    <property type="project" value="UniProtKB"/>
</dbReference>
<dbReference type="GO" id="GO:0005634">
    <property type="term" value="C:nucleus"/>
    <property type="evidence" value="ECO:0007669"/>
    <property type="project" value="UniProtKB-SubCell"/>
</dbReference>
<dbReference type="GO" id="GO:0005819">
    <property type="term" value="C:spindle"/>
    <property type="evidence" value="ECO:0007669"/>
    <property type="project" value="UniProtKB-SubCell"/>
</dbReference>
<dbReference type="GO" id="GO:0042802">
    <property type="term" value="F:identical protein binding"/>
    <property type="evidence" value="ECO:0000250"/>
    <property type="project" value="UniProtKB"/>
</dbReference>
<dbReference type="GO" id="GO:0044183">
    <property type="term" value="F:protein folding chaperone"/>
    <property type="evidence" value="ECO:0000250"/>
    <property type="project" value="UniProtKB"/>
</dbReference>
<dbReference type="GO" id="GO:0042803">
    <property type="term" value="F:protein homodimerization activity"/>
    <property type="evidence" value="ECO:0000250"/>
    <property type="project" value="UniProtKB"/>
</dbReference>
<dbReference type="GO" id="GO:0051082">
    <property type="term" value="F:unfolded protein binding"/>
    <property type="evidence" value="ECO:0007669"/>
    <property type="project" value="TreeGrafter"/>
</dbReference>
<dbReference type="GO" id="GO:0061077">
    <property type="term" value="P:chaperone-mediated protein folding"/>
    <property type="evidence" value="ECO:0000250"/>
    <property type="project" value="UniProtKB"/>
</dbReference>
<dbReference type="GO" id="GO:0043066">
    <property type="term" value="P:negative regulation of apoptotic process"/>
    <property type="evidence" value="ECO:0007669"/>
    <property type="project" value="TreeGrafter"/>
</dbReference>
<dbReference type="GO" id="GO:0042026">
    <property type="term" value="P:protein refolding"/>
    <property type="evidence" value="ECO:0007669"/>
    <property type="project" value="TreeGrafter"/>
</dbReference>
<dbReference type="GO" id="GO:0009408">
    <property type="term" value="P:response to heat"/>
    <property type="evidence" value="ECO:0007669"/>
    <property type="project" value="TreeGrafter"/>
</dbReference>
<dbReference type="CDD" id="cd06475">
    <property type="entry name" value="ACD_HspB1_like"/>
    <property type="match status" value="1"/>
</dbReference>
<dbReference type="FunFam" id="2.60.40.790:FF:000024">
    <property type="entry name" value="heat shock protein beta-1"/>
    <property type="match status" value="1"/>
</dbReference>
<dbReference type="Gene3D" id="2.60.40.790">
    <property type="match status" value="1"/>
</dbReference>
<dbReference type="InterPro" id="IPR002068">
    <property type="entry name" value="A-crystallin/Hsp20_dom"/>
</dbReference>
<dbReference type="InterPro" id="IPR037876">
    <property type="entry name" value="ACD_HspB1"/>
</dbReference>
<dbReference type="InterPro" id="IPR001436">
    <property type="entry name" value="Alpha-crystallin/sHSP_animal"/>
</dbReference>
<dbReference type="InterPro" id="IPR008978">
    <property type="entry name" value="HSP20-like_chaperone"/>
</dbReference>
<dbReference type="PANTHER" id="PTHR45640:SF7">
    <property type="entry name" value="HEAT SHOCK PROTEIN BETA-1"/>
    <property type="match status" value="1"/>
</dbReference>
<dbReference type="PANTHER" id="PTHR45640">
    <property type="entry name" value="HEAT SHOCK PROTEIN HSP-12.2-RELATED"/>
    <property type="match status" value="1"/>
</dbReference>
<dbReference type="Pfam" id="PF00011">
    <property type="entry name" value="HSP20"/>
    <property type="match status" value="1"/>
</dbReference>
<dbReference type="PRINTS" id="PR00299">
    <property type="entry name" value="ACRYSTALLIN"/>
</dbReference>
<dbReference type="SUPFAM" id="SSF49764">
    <property type="entry name" value="HSP20-like chaperones"/>
    <property type="match status" value="1"/>
</dbReference>
<dbReference type="PROSITE" id="PS01031">
    <property type="entry name" value="SHSP"/>
    <property type="match status" value="1"/>
</dbReference>
<comment type="function">
    <text evidence="2">Small heat shock protein which functions as a molecular chaperone probably maintaining denatured proteins in a folding-competent state. Plays a role in stress resistance and actin organization.</text>
</comment>
<comment type="subunit">
    <text evidence="2">Homooligomer. Homodimer; becomes monomeric upon activation. Heterooligomer.</text>
</comment>
<comment type="subcellular location">
    <subcellularLocation>
        <location evidence="2">Cytoplasm</location>
    </subcellularLocation>
    <subcellularLocation>
        <location evidence="2">Nucleus</location>
    </subcellularLocation>
    <subcellularLocation>
        <location evidence="2">Cytoplasm</location>
        <location evidence="2">Cytoskeleton</location>
        <location evidence="2">Spindle</location>
    </subcellularLocation>
</comment>
<comment type="similarity">
    <text evidence="3">Belongs to the small heat shock protein (HSP20) family.</text>
</comment>
<feature type="chain" id="PRO_0000125932" description="Heat shock protein beta-1">
    <location>
        <begin position="1"/>
        <end position="201"/>
    </location>
</feature>
<feature type="domain" description="sHSP" evidence="3">
    <location>
        <begin position="83"/>
        <end position="193"/>
    </location>
</feature>
<feature type="modified residue" description="Phosphoserine; by PKA and PKC" evidence="1">
    <location>
        <position position="15"/>
    </location>
</feature>